<dbReference type="EMBL" id="AM398681">
    <property type="protein sequence ID" value="CAL43400.1"/>
    <property type="molecule type" value="Genomic_DNA"/>
</dbReference>
<dbReference type="RefSeq" id="YP_001296211.1">
    <property type="nucleotide sequence ID" value="NC_009613.3"/>
</dbReference>
<dbReference type="SMR" id="A6GZ77"/>
<dbReference type="STRING" id="402612.FP1317"/>
<dbReference type="EnsemblBacteria" id="CAL43400">
    <property type="protein sequence ID" value="CAL43400"/>
    <property type="gene ID" value="FP1317"/>
</dbReference>
<dbReference type="KEGG" id="fps:FP1317"/>
<dbReference type="PATRIC" id="fig|402612.5.peg.1334"/>
<dbReference type="eggNOG" id="COG0257">
    <property type="taxonomic scope" value="Bacteria"/>
</dbReference>
<dbReference type="HOGENOM" id="CLU_135723_3_3_10"/>
<dbReference type="OrthoDB" id="9801558at2"/>
<dbReference type="Proteomes" id="UP000006394">
    <property type="component" value="Chromosome"/>
</dbReference>
<dbReference type="GO" id="GO:1990904">
    <property type="term" value="C:ribonucleoprotein complex"/>
    <property type="evidence" value="ECO:0007669"/>
    <property type="project" value="UniProtKB-KW"/>
</dbReference>
<dbReference type="GO" id="GO:0005840">
    <property type="term" value="C:ribosome"/>
    <property type="evidence" value="ECO:0007669"/>
    <property type="project" value="UniProtKB-KW"/>
</dbReference>
<dbReference type="GO" id="GO:0003735">
    <property type="term" value="F:structural constituent of ribosome"/>
    <property type="evidence" value="ECO:0007669"/>
    <property type="project" value="InterPro"/>
</dbReference>
<dbReference type="GO" id="GO:0006412">
    <property type="term" value="P:translation"/>
    <property type="evidence" value="ECO:0007669"/>
    <property type="project" value="UniProtKB-UniRule"/>
</dbReference>
<dbReference type="HAMAP" id="MF_00251">
    <property type="entry name" value="Ribosomal_bL36"/>
    <property type="match status" value="1"/>
</dbReference>
<dbReference type="InterPro" id="IPR000473">
    <property type="entry name" value="Ribosomal_bL36"/>
</dbReference>
<dbReference type="InterPro" id="IPR035977">
    <property type="entry name" value="Ribosomal_bL36_sp"/>
</dbReference>
<dbReference type="InterPro" id="IPR047621">
    <property type="entry name" value="Ribosomal_L36_bact"/>
</dbReference>
<dbReference type="NCBIfam" id="NF002021">
    <property type="entry name" value="PRK00831.1"/>
    <property type="match status" value="1"/>
</dbReference>
<dbReference type="NCBIfam" id="TIGR01022">
    <property type="entry name" value="rpmJ_bact"/>
    <property type="match status" value="1"/>
</dbReference>
<dbReference type="PANTHER" id="PTHR47781">
    <property type="entry name" value="50S RIBOSOMAL PROTEIN L36 2"/>
    <property type="match status" value="1"/>
</dbReference>
<dbReference type="PANTHER" id="PTHR47781:SF1">
    <property type="entry name" value="LARGE RIBOSOMAL SUBUNIT PROTEIN BL36B"/>
    <property type="match status" value="1"/>
</dbReference>
<dbReference type="Pfam" id="PF00444">
    <property type="entry name" value="Ribosomal_L36"/>
    <property type="match status" value="1"/>
</dbReference>
<dbReference type="SUPFAM" id="SSF57840">
    <property type="entry name" value="Ribosomal protein L36"/>
    <property type="match status" value="1"/>
</dbReference>
<dbReference type="PROSITE" id="PS00828">
    <property type="entry name" value="RIBOSOMAL_L36"/>
    <property type="match status" value="1"/>
</dbReference>
<gene>
    <name evidence="1" type="primary">rpmJ</name>
    <name type="ordered locus">FP1317</name>
</gene>
<protein>
    <recommendedName>
        <fullName evidence="1">Large ribosomal subunit protein bL36</fullName>
    </recommendedName>
    <alternativeName>
        <fullName evidence="2">50S ribosomal protein L36</fullName>
    </alternativeName>
</protein>
<accession>A6GZ77</accession>
<evidence type="ECO:0000255" key="1">
    <source>
        <dbReference type="HAMAP-Rule" id="MF_00251"/>
    </source>
</evidence>
<evidence type="ECO:0000305" key="2"/>
<reference key="1">
    <citation type="journal article" date="2007" name="Nat. Biotechnol.">
        <title>Complete genome sequence of the fish pathogen Flavobacterium psychrophilum.</title>
        <authorList>
            <person name="Duchaud E."/>
            <person name="Boussaha M."/>
            <person name="Loux V."/>
            <person name="Bernardet J.-F."/>
            <person name="Michel C."/>
            <person name="Kerouault B."/>
            <person name="Mondot S."/>
            <person name="Nicolas P."/>
            <person name="Bossy R."/>
            <person name="Caron C."/>
            <person name="Bessieres P."/>
            <person name="Gibrat J.-F."/>
            <person name="Claverol S."/>
            <person name="Dumetz F."/>
            <person name="Le Henaff M."/>
            <person name="Benmansour A."/>
        </authorList>
    </citation>
    <scope>NUCLEOTIDE SEQUENCE [LARGE SCALE GENOMIC DNA]</scope>
    <source>
        <strain>ATCC 49511 / DSM 21280 / CIP 103535 / JIP02/86</strain>
    </source>
</reference>
<proteinExistence type="inferred from homology"/>
<organism>
    <name type="scientific">Flavobacterium psychrophilum (strain ATCC 49511 / DSM 21280 / CIP 103535 / JIP02/86)</name>
    <dbReference type="NCBI Taxonomy" id="402612"/>
    <lineage>
        <taxon>Bacteria</taxon>
        <taxon>Pseudomonadati</taxon>
        <taxon>Bacteroidota</taxon>
        <taxon>Flavobacteriia</taxon>
        <taxon>Flavobacteriales</taxon>
        <taxon>Flavobacteriaceae</taxon>
        <taxon>Flavobacterium</taxon>
    </lineage>
</organism>
<feature type="chain" id="PRO_0000302202" description="Large ribosomal subunit protein bL36">
    <location>
        <begin position="1"/>
        <end position="38"/>
    </location>
</feature>
<sequence length="38" mass="4585">MKVRASVKKRSPECKIVRRKGRLYVINKKNPRFKQRQG</sequence>
<name>RL36_FLAPJ</name>
<keyword id="KW-1185">Reference proteome</keyword>
<keyword id="KW-0687">Ribonucleoprotein</keyword>
<keyword id="KW-0689">Ribosomal protein</keyword>
<comment type="similarity">
    <text evidence="1">Belongs to the bacterial ribosomal protein bL36 family.</text>
</comment>